<feature type="chain" id="PRO_0000455223" description="Uridylate cyclase">
    <location>
        <begin position="1"/>
        <end position="305"/>
    </location>
</feature>
<feature type="binding site" evidence="7">
    <location>
        <position position="58"/>
    </location>
    <ligand>
        <name>Mn(2+)</name>
        <dbReference type="ChEBI" id="CHEBI:29035"/>
        <label>1</label>
    </ligand>
</feature>
<feature type="binding site" evidence="7">
    <location>
        <position position="58"/>
    </location>
    <ligand>
        <name>Mn(2+)</name>
        <dbReference type="ChEBI" id="CHEBI:29035"/>
        <label>2</label>
    </ligand>
</feature>
<feature type="binding site" evidence="7">
    <location>
        <position position="102"/>
    </location>
    <ligand>
        <name>Mn(2+)</name>
        <dbReference type="ChEBI" id="CHEBI:29035"/>
        <label>1</label>
    </ligand>
</feature>
<feature type="binding site" evidence="7">
    <location>
        <position position="102"/>
    </location>
    <ligand>
        <name>Mn(2+)</name>
        <dbReference type="ChEBI" id="CHEBI:29035"/>
        <label>2</label>
    </ligand>
</feature>
<keyword id="KW-0051">Antiviral defense</keyword>
<keyword id="KW-0963">Cytoplasm</keyword>
<keyword id="KW-0456">Lyase</keyword>
<keyword id="KW-0464">Manganese</keyword>
<keyword id="KW-0479">Metal-binding</keyword>
<keyword id="KW-0547">Nucleotide-binding</keyword>
<keyword id="KW-1185">Reference proteome</keyword>
<comment type="function">
    <text evidence="7">Pycsar (pyrimidine cyclase system for antiphage resistance) provides immunity against bacteriophage. The pyrimidine cyclase (PycC) synthesizes cyclic nucleotides in response to infection; these serve as specific second messenger signals. The signals activate the adjacent effector, leading to bacterial cell death and abortive phage infection. A clade D Pycsar system.</text>
</comment>
<comment type="function">
    <text evidence="3 7">The pyrimidine cyclase gene of a two-gene Pycsar system, generates cyclic UMP (cUMP) from UTP as well as cGMP from GTP to a lesser extent, has little to no activity on ATP or CTP (PubMed:34644530). Expression of this and adjacent effector MePycTM (AC A0A1C5G2D0) probably confers resistance to bacteriophage. The genes are probably only expressed in response to bacteriophage infection (Probable).</text>
</comment>
<comment type="catalytic activity">
    <reaction evidence="3">
        <text>GTP = 3',5'-cyclic GMP + diphosphate</text>
        <dbReference type="Rhea" id="RHEA:13665"/>
        <dbReference type="ChEBI" id="CHEBI:33019"/>
        <dbReference type="ChEBI" id="CHEBI:37565"/>
        <dbReference type="ChEBI" id="CHEBI:57746"/>
        <dbReference type="EC" id="4.6.1.2"/>
    </reaction>
</comment>
<comment type="catalytic activity">
    <reaction evidence="3">
        <text>UTP = 3',5'-cyclic UMP + diphosphate</text>
        <dbReference type="Rhea" id="RHEA:69603"/>
        <dbReference type="ChEBI" id="CHEBI:33019"/>
        <dbReference type="ChEBI" id="CHEBI:46398"/>
        <dbReference type="ChEBI" id="CHEBI:184387"/>
        <dbReference type="EC" id="4.6.1.26"/>
    </reaction>
</comment>
<comment type="cofactor">
    <cofactor evidence="2">
        <name>Mn(2+)</name>
        <dbReference type="ChEBI" id="CHEBI:29035"/>
    </cofactor>
</comment>
<comment type="subunit">
    <text evidence="1">Homodimer.</text>
</comment>
<comment type="subcellular location">
    <subcellularLocation>
        <location evidence="6">Cytoplasm</location>
    </subcellularLocation>
</comment>
<comment type="similarity">
    <text evidence="7">Belongs to the adenylyl cyclase class-4/guanylyl cyclase family. Pyrimidine cyclase subfamily.</text>
</comment>
<organism>
    <name type="scientific">Micromonospora echinofusca</name>
    <dbReference type="NCBI Taxonomy" id="47858"/>
    <lineage>
        <taxon>Bacteria</taxon>
        <taxon>Bacillati</taxon>
        <taxon>Actinomycetota</taxon>
        <taxon>Actinomycetes</taxon>
        <taxon>Micromonosporales</taxon>
        <taxon>Micromonosporaceae</taxon>
        <taxon>Micromonospora</taxon>
    </lineage>
</organism>
<proteinExistence type="evidence at protein level"/>
<dbReference type="EC" id="4.6.1.2" evidence="3"/>
<dbReference type="EC" id="4.6.1.26" evidence="3"/>
<dbReference type="EMBL" id="LT607733">
    <property type="protein sequence ID" value="SCG13990.1"/>
    <property type="molecule type" value="Genomic_DNA"/>
</dbReference>
<dbReference type="RefSeq" id="WP_157747014.1">
    <property type="nucleotide sequence ID" value="NZ_LT607733.1"/>
</dbReference>
<dbReference type="SMR" id="A0A1C5G2V9"/>
<dbReference type="GeneID" id="95805796"/>
<dbReference type="Proteomes" id="UP000198251">
    <property type="component" value="Chromosome i"/>
</dbReference>
<dbReference type="GO" id="GO:0005737">
    <property type="term" value="C:cytoplasm"/>
    <property type="evidence" value="ECO:0007669"/>
    <property type="project" value="UniProtKB-SubCell"/>
</dbReference>
<dbReference type="GO" id="GO:0016829">
    <property type="term" value="F:lyase activity"/>
    <property type="evidence" value="ECO:0007669"/>
    <property type="project" value="UniProtKB-KW"/>
</dbReference>
<dbReference type="GO" id="GO:0046872">
    <property type="term" value="F:metal ion binding"/>
    <property type="evidence" value="ECO:0007669"/>
    <property type="project" value="UniProtKB-KW"/>
</dbReference>
<dbReference type="GO" id="GO:0000166">
    <property type="term" value="F:nucleotide binding"/>
    <property type="evidence" value="ECO:0007669"/>
    <property type="project" value="UniProtKB-KW"/>
</dbReference>
<dbReference type="GO" id="GO:0051607">
    <property type="term" value="P:defense response to virus"/>
    <property type="evidence" value="ECO:0007669"/>
    <property type="project" value="UniProtKB-KW"/>
</dbReference>
<dbReference type="Gene3D" id="3.30.70.1230">
    <property type="entry name" value="Nucleotide cyclase"/>
    <property type="match status" value="1"/>
</dbReference>
<dbReference type="InterPro" id="IPR029787">
    <property type="entry name" value="Nucleotide_cyclase"/>
</dbReference>
<dbReference type="SUPFAM" id="SSF55073">
    <property type="entry name" value="Nucleotide cyclase"/>
    <property type="match status" value="1"/>
</dbReference>
<gene>
    <name evidence="4" type="primary">pycC</name>
    <name evidence="5" type="ORF">GA0070610_0182</name>
</gene>
<accession>A0A1C5G2V9</accession>
<sequence length="305" mass="33529">MTEVDLKALLADVDGDVATELASKPEVIDKGHELDISTLPIQARKWHKLRDAVAVVADLKSSTQLGLNKHAASTASIYEAATGGVVQIFDEFDANFVAIQGDGAFALFWGDKRRQRAVCAGITIKTFSFKHLVPRLEKKWDGLPETGLKVGLGSSPLLVKRVGVPRTEHQEPVWAGRAVNYAAKAAQQADRHEMVVTGTIWDWVSDNDFLAVTCSCSNPNPDLWSNITIEKIPDGDGDREGKRLTSSWCDVHGPEYCAAVLEGKKRRADVTTQRTSALAAEMKSWVRNKAAQDRKNRLARYQGLH</sequence>
<reference key="1">
    <citation type="submission" date="2016-06" db="EMBL/GenBank/DDBJ databases">
        <authorList>
            <person name="Varghese N."/>
        </authorList>
    </citation>
    <scope>NUCLEOTIDE SEQUENCE [LARGE SCALE GENOMIC DNA]</scope>
    <source>
        <strain>DSM 43913 / CIP 108946 / JCM 3327 / NBRC 14267 / 71-m68</strain>
    </source>
</reference>
<reference key="2">
    <citation type="journal article" date="2021" name="Cell">
        <title>Cyclic CMP and cyclic UMP mediate bacterial immunity against phages.</title>
        <authorList>
            <person name="Tal N."/>
            <person name="Morehouse B.R."/>
            <person name="Millman A."/>
            <person name="Stokar-Avihail A."/>
            <person name="Avraham C."/>
            <person name="Fedorenko T."/>
            <person name="Yirmiya E."/>
            <person name="Herbst E."/>
            <person name="Brandis A."/>
            <person name="Mehlman T."/>
            <person name="Oppenheimer-Shaanan Y."/>
            <person name="Keszei A.F.A."/>
            <person name="Shao S."/>
            <person name="Amitai G."/>
            <person name="Kranzusch P.J."/>
            <person name="Sorek R."/>
        </authorList>
    </citation>
    <scope>FUNCTION</scope>
    <scope>CATALYTIC ACTIVITY</scope>
    <scope>CLASSIFICATION</scope>
    <source>
        <strain>DSM 43913 / CIP 108946 / JCM 3327 / NBRC 14267 / 71-m68</strain>
    </source>
</reference>
<protein>
    <recommendedName>
        <fullName evidence="4">Uridylate cyclase</fullName>
        <ecNumber evidence="3">4.6.1.2</ecNumber>
        <ecNumber evidence="3">4.6.1.26</ecNumber>
    </recommendedName>
    <alternativeName>
        <fullName>Cyclic UMP synthase</fullName>
        <shortName evidence="4">cUMP synthase</shortName>
    </alternativeName>
    <alternativeName>
        <fullName evidence="4">MePycC</fullName>
    </alternativeName>
</protein>
<evidence type="ECO:0000250" key="1">
    <source>
        <dbReference type="UniProtKB" id="A0A0J5ZXG5"/>
    </source>
</evidence>
<evidence type="ECO:0000250" key="2">
    <source>
        <dbReference type="UniProtKB" id="P0DV24"/>
    </source>
</evidence>
<evidence type="ECO:0000269" key="3">
    <source>
    </source>
</evidence>
<evidence type="ECO:0000303" key="4">
    <source>
    </source>
</evidence>
<evidence type="ECO:0000303" key="5">
    <source ref="1"/>
</evidence>
<evidence type="ECO:0000305" key="6"/>
<evidence type="ECO:0000305" key="7">
    <source>
    </source>
</evidence>
<name>PYCC_MICEH</name>